<feature type="chain" id="PRO_0000300331" description="DNA-directed RNA polymerase subunit beta">
    <location>
        <begin position="1"/>
        <end position="1221"/>
    </location>
</feature>
<feature type="region of interest" description="Disordered" evidence="2">
    <location>
        <begin position="1176"/>
        <end position="1221"/>
    </location>
</feature>
<feature type="compositionally biased region" description="Acidic residues" evidence="2">
    <location>
        <begin position="1183"/>
        <end position="1215"/>
    </location>
</feature>
<evidence type="ECO:0000255" key="1">
    <source>
        <dbReference type="HAMAP-Rule" id="MF_01321"/>
    </source>
</evidence>
<evidence type="ECO:0000256" key="2">
    <source>
        <dbReference type="SAM" id="MobiDB-lite"/>
    </source>
</evidence>
<reference key="1">
    <citation type="journal article" date="2006" name="Proc. Natl. Acad. Sci. U.S.A.">
        <title>The complete genome sequence of Lactobacillus bulgaricus reveals extensive and ongoing reductive evolution.</title>
        <authorList>
            <person name="van de Guchte M."/>
            <person name="Penaud S."/>
            <person name="Grimaldi C."/>
            <person name="Barbe V."/>
            <person name="Bryson K."/>
            <person name="Nicolas P."/>
            <person name="Robert C."/>
            <person name="Oztas S."/>
            <person name="Mangenot S."/>
            <person name="Couloux A."/>
            <person name="Loux V."/>
            <person name="Dervyn R."/>
            <person name="Bossy R."/>
            <person name="Bolotin A."/>
            <person name="Batto J.-M."/>
            <person name="Walunas T."/>
            <person name="Gibrat J.-F."/>
            <person name="Bessieres P."/>
            <person name="Weissenbach J."/>
            <person name="Ehrlich S.D."/>
            <person name="Maguin E."/>
        </authorList>
    </citation>
    <scope>NUCLEOTIDE SEQUENCE [LARGE SCALE GENOMIC DNA]</scope>
    <source>
        <strain>ATCC 11842 / DSM 20081 / BCRC 10696 / JCM 1002 / NBRC 13953 / NCIMB 11778 / NCTC 12712 / WDCM 00102 / Lb 14</strain>
    </source>
</reference>
<dbReference type="EC" id="2.7.7.6" evidence="1"/>
<dbReference type="EMBL" id="CR954253">
    <property type="protein sequence ID" value="CAI97221.1"/>
    <property type="molecule type" value="Genomic_DNA"/>
</dbReference>
<dbReference type="RefSeq" id="WP_011543638.1">
    <property type="nucleotide sequence ID" value="NC_008054.1"/>
</dbReference>
<dbReference type="SMR" id="Q1GBM5"/>
<dbReference type="STRING" id="390333.Ldb0386"/>
<dbReference type="KEGG" id="ldb:Ldb0386"/>
<dbReference type="PATRIC" id="fig|390333.7.peg.345"/>
<dbReference type="eggNOG" id="COG0085">
    <property type="taxonomic scope" value="Bacteria"/>
</dbReference>
<dbReference type="HOGENOM" id="CLU_000524_4_1_9"/>
<dbReference type="BioCyc" id="LDEL390333:LDB_RS01640-MONOMER"/>
<dbReference type="Proteomes" id="UP000001259">
    <property type="component" value="Chromosome"/>
</dbReference>
<dbReference type="GO" id="GO:0000428">
    <property type="term" value="C:DNA-directed RNA polymerase complex"/>
    <property type="evidence" value="ECO:0007669"/>
    <property type="project" value="UniProtKB-KW"/>
</dbReference>
<dbReference type="GO" id="GO:0003677">
    <property type="term" value="F:DNA binding"/>
    <property type="evidence" value="ECO:0007669"/>
    <property type="project" value="UniProtKB-UniRule"/>
</dbReference>
<dbReference type="GO" id="GO:0003899">
    <property type="term" value="F:DNA-directed RNA polymerase activity"/>
    <property type="evidence" value="ECO:0007669"/>
    <property type="project" value="UniProtKB-UniRule"/>
</dbReference>
<dbReference type="GO" id="GO:0032549">
    <property type="term" value="F:ribonucleoside binding"/>
    <property type="evidence" value="ECO:0007669"/>
    <property type="project" value="InterPro"/>
</dbReference>
<dbReference type="GO" id="GO:0006351">
    <property type="term" value="P:DNA-templated transcription"/>
    <property type="evidence" value="ECO:0007669"/>
    <property type="project" value="UniProtKB-UniRule"/>
</dbReference>
<dbReference type="CDD" id="cd00653">
    <property type="entry name" value="RNA_pol_B_RPB2"/>
    <property type="match status" value="1"/>
</dbReference>
<dbReference type="FunFam" id="3.90.1800.10:FF:000001">
    <property type="entry name" value="DNA-directed RNA polymerase subunit beta"/>
    <property type="match status" value="1"/>
</dbReference>
<dbReference type="Gene3D" id="2.40.50.100">
    <property type="match status" value="1"/>
</dbReference>
<dbReference type="Gene3D" id="2.40.50.150">
    <property type="match status" value="1"/>
</dbReference>
<dbReference type="Gene3D" id="3.90.1100.10">
    <property type="match status" value="1"/>
</dbReference>
<dbReference type="Gene3D" id="2.30.150.10">
    <property type="entry name" value="DNA-directed RNA polymerase, beta subunit, external 1 domain"/>
    <property type="match status" value="1"/>
</dbReference>
<dbReference type="Gene3D" id="2.40.270.10">
    <property type="entry name" value="DNA-directed RNA polymerase, subunit 2, domain 6"/>
    <property type="match status" value="1"/>
</dbReference>
<dbReference type="Gene3D" id="3.90.1800.10">
    <property type="entry name" value="RNA polymerase alpha subunit dimerisation domain"/>
    <property type="match status" value="1"/>
</dbReference>
<dbReference type="Gene3D" id="3.90.1110.10">
    <property type="entry name" value="RNA polymerase Rpb2, domain 2"/>
    <property type="match status" value="1"/>
</dbReference>
<dbReference type="HAMAP" id="MF_01321">
    <property type="entry name" value="RNApol_bact_RpoB"/>
    <property type="match status" value="1"/>
</dbReference>
<dbReference type="InterPro" id="IPR042107">
    <property type="entry name" value="DNA-dir_RNA_pol_bsu_ext_1_sf"/>
</dbReference>
<dbReference type="InterPro" id="IPR019462">
    <property type="entry name" value="DNA-dir_RNA_pol_bsu_external_1"/>
</dbReference>
<dbReference type="InterPro" id="IPR015712">
    <property type="entry name" value="DNA-dir_RNA_pol_su2"/>
</dbReference>
<dbReference type="InterPro" id="IPR007120">
    <property type="entry name" value="DNA-dir_RNAP_su2_dom"/>
</dbReference>
<dbReference type="InterPro" id="IPR037033">
    <property type="entry name" value="DNA-dir_RNAP_su2_hyb_sf"/>
</dbReference>
<dbReference type="InterPro" id="IPR010243">
    <property type="entry name" value="RNA_pol_bsu_bac"/>
</dbReference>
<dbReference type="InterPro" id="IPR007121">
    <property type="entry name" value="RNA_pol_bsu_CS"/>
</dbReference>
<dbReference type="InterPro" id="IPR007644">
    <property type="entry name" value="RNA_pol_bsu_protrusion"/>
</dbReference>
<dbReference type="InterPro" id="IPR007642">
    <property type="entry name" value="RNA_pol_Rpb2_2"/>
</dbReference>
<dbReference type="InterPro" id="IPR037034">
    <property type="entry name" value="RNA_pol_Rpb2_2_sf"/>
</dbReference>
<dbReference type="InterPro" id="IPR007645">
    <property type="entry name" value="RNA_pol_Rpb2_3"/>
</dbReference>
<dbReference type="InterPro" id="IPR007641">
    <property type="entry name" value="RNA_pol_Rpb2_7"/>
</dbReference>
<dbReference type="InterPro" id="IPR014724">
    <property type="entry name" value="RNA_pol_RPB2_OB-fold"/>
</dbReference>
<dbReference type="NCBIfam" id="NF001616">
    <property type="entry name" value="PRK00405.1"/>
    <property type="match status" value="1"/>
</dbReference>
<dbReference type="NCBIfam" id="TIGR02013">
    <property type="entry name" value="rpoB"/>
    <property type="match status" value="1"/>
</dbReference>
<dbReference type="PANTHER" id="PTHR20856">
    <property type="entry name" value="DNA-DIRECTED RNA POLYMERASE I SUBUNIT 2"/>
    <property type="match status" value="1"/>
</dbReference>
<dbReference type="Pfam" id="PF04563">
    <property type="entry name" value="RNA_pol_Rpb2_1"/>
    <property type="match status" value="1"/>
</dbReference>
<dbReference type="Pfam" id="PF04561">
    <property type="entry name" value="RNA_pol_Rpb2_2"/>
    <property type="match status" value="2"/>
</dbReference>
<dbReference type="Pfam" id="PF04565">
    <property type="entry name" value="RNA_pol_Rpb2_3"/>
    <property type="match status" value="1"/>
</dbReference>
<dbReference type="Pfam" id="PF10385">
    <property type="entry name" value="RNA_pol_Rpb2_45"/>
    <property type="match status" value="1"/>
</dbReference>
<dbReference type="Pfam" id="PF00562">
    <property type="entry name" value="RNA_pol_Rpb2_6"/>
    <property type="match status" value="1"/>
</dbReference>
<dbReference type="Pfam" id="PF04560">
    <property type="entry name" value="RNA_pol_Rpb2_7"/>
    <property type="match status" value="1"/>
</dbReference>
<dbReference type="SUPFAM" id="SSF64484">
    <property type="entry name" value="beta and beta-prime subunits of DNA dependent RNA-polymerase"/>
    <property type="match status" value="1"/>
</dbReference>
<dbReference type="PROSITE" id="PS01166">
    <property type="entry name" value="RNA_POL_BETA"/>
    <property type="match status" value="1"/>
</dbReference>
<accession>Q1GBM5</accession>
<name>RPOB_LACDA</name>
<gene>
    <name evidence="1" type="primary">rpoB</name>
    <name type="ordered locus">Ldb0386</name>
</gene>
<keyword id="KW-0240">DNA-directed RNA polymerase</keyword>
<keyword id="KW-0548">Nucleotidyltransferase</keyword>
<keyword id="KW-1185">Reference proteome</keyword>
<keyword id="KW-0804">Transcription</keyword>
<keyword id="KW-0808">Transferase</keyword>
<organism>
    <name type="scientific">Lactobacillus delbrueckii subsp. bulgaricus (strain ATCC 11842 / DSM 20081 / BCRC 10696 / JCM 1002 / NBRC 13953 / NCIMB 11778 / NCTC 12712 / WDCM 00102 / Lb 14)</name>
    <dbReference type="NCBI Taxonomy" id="390333"/>
    <lineage>
        <taxon>Bacteria</taxon>
        <taxon>Bacillati</taxon>
        <taxon>Bacillota</taxon>
        <taxon>Bacilli</taxon>
        <taxon>Lactobacillales</taxon>
        <taxon>Lactobacillaceae</taxon>
        <taxon>Lactobacillus</taxon>
    </lineage>
</organism>
<protein>
    <recommendedName>
        <fullName evidence="1">DNA-directed RNA polymerase subunit beta</fullName>
        <shortName evidence="1">RNAP subunit beta</shortName>
        <ecNumber evidence="1">2.7.7.6</ecNumber>
    </recommendedName>
    <alternativeName>
        <fullName evidence="1">RNA polymerase subunit beta</fullName>
    </alternativeName>
    <alternativeName>
        <fullName evidence="1">Transcriptase subunit beta</fullName>
    </alternativeName>
</protein>
<proteinExistence type="inferred from homology"/>
<sequence length="1221" mass="135844">MLNGHVVNYGQHRTRRSFSRIKEILPLPNLTDVQTESYKWFLDEGVKEVFDDILPISDTSGRLTLEYVDYKLQEPKYTVDESRKHDATYSAPMHVTLKLTNHETGEIKTQDVFFGDLPLMTKSGSFIVNGAERVIVSQLVRSPGVYYSGEFDKNGRQIFGTTVIPNRGAWLEFETDAKNISYVRVDRTRKLPLSVLVRALGFGSDSEIKEIFGDSDTLDLTLDKDVHKNPADSRVAEALKDIYDRLRPGEPKTTDSSRSLLVSRFFDPRRYDLAAVGRYKVNKKLSLKNRLLGYTLAETLADPGTGEVLAAKGTVVNNEVMDVLKDYLDRDDFKTVTYTPSDEGVIPEPVTVQEIKVFSREIPDREIKLISNGHIAEDVKCITPADIIASVNYFLELQEGVGNIDDIDHLGNRRIRRVGELLQNQMRIGLARMERVVRERMSIQDAATVTPQQLINIRPIVGSIKEFFGSSQLSQFMDQNNPLGELTHKRRMSALGPGGLSRDRAGYEVRDVHYTHYGRLCPIETPEGPNIGLINSMATYAIINKYGFLETPYRRVSWATHKVTDKIDYLTADEEDNYIIAGANTPLNEDGSFVDDVILCRHREDNVEVSPDRIDYIDVIPKQVVSVTSACIPFLENDDSNRALMGANHQRQAVPLINPHGPLVATGMEYRAGHDSGDALLAEADGEVEYVDANEIRVRREDQTLDTYTLEKYRRSNATKNYNQTPNVKRGDKVVDGQVIANGPSMADGELALGQNPVIAFTTWNMYNFEDAIMLSERLVKEDVYTSIHIEDYDSEARDTKLGPEEITREIPNVGEDALKDLDENGIIRIGAEVHDGDILVGKVTPKGITELSAEERLLHAIFGEKAREVRDTSLRVPHGGGGVVQDVQVFTREAGDELAPGVNTLVRVYIVQKRKIQVGDKMSGRHGNKGTVALIAPVEDMPYLPDGTPVDICLNPMGVPSRMNIGQLLEIHLGRAARALGIHVATPVFDGASEDDVWDFVREAGVDSDGKTVLYDGRTGEPFHNRVSVGVMYYLKLTHMVDDKIHARSIGPYSLVTQQPLGGKAQFGGQRFGEMEVWALEAYGAAYTLQEILTYKSDDVVGRVKAYEAIVKGERITKPGVPESFRVLVKELQSLGLDLRVLDSDENEVELRDMDEDSNEHVNIDALSRLAEAQEKKKLAEEEAEIAAEAEAEGSAEGDAAEADADANEAETADDDKASK</sequence>
<comment type="function">
    <text evidence="1">DNA-dependent RNA polymerase catalyzes the transcription of DNA into RNA using the four ribonucleoside triphosphates as substrates.</text>
</comment>
<comment type="catalytic activity">
    <reaction evidence="1">
        <text>RNA(n) + a ribonucleoside 5'-triphosphate = RNA(n+1) + diphosphate</text>
        <dbReference type="Rhea" id="RHEA:21248"/>
        <dbReference type="Rhea" id="RHEA-COMP:14527"/>
        <dbReference type="Rhea" id="RHEA-COMP:17342"/>
        <dbReference type="ChEBI" id="CHEBI:33019"/>
        <dbReference type="ChEBI" id="CHEBI:61557"/>
        <dbReference type="ChEBI" id="CHEBI:140395"/>
        <dbReference type="EC" id="2.7.7.6"/>
    </reaction>
</comment>
<comment type="subunit">
    <text evidence="1">The RNAP catalytic core consists of 2 alpha, 1 beta, 1 beta' and 1 omega subunit. When a sigma factor is associated with the core the holoenzyme is formed, which can initiate transcription.</text>
</comment>
<comment type="similarity">
    <text evidence="1">Belongs to the RNA polymerase beta chain family.</text>
</comment>